<keyword id="KW-1003">Cell membrane</keyword>
<keyword id="KW-0413">Isomerase</keyword>
<keyword id="KW-0449">Lipoprotein</keyword>
<keyword id="KW-0472">Membrane</keyword>
<keyword id="KW-0564">Palmitate</keyword>
<keyword id="KW-1185">Reference proteome</keyword>
<keyword id="KW-0697">Rotamase</keyword>
<keyword id="KW-0732">Signal</keyword>
<comment type="function">
    <text evidence="1">Plays a major role in protein secretion by helping the post-translocational extracellular folding of several secreted proteins.</text>
</comment>
<comment type="catalytic activity">
    <reaction evidence="1">
        <text>[protein]-peptidylproline (omega=180) = [protein]-peptidylproline (omega=0)</text>
        <dbReference type="Rhea" id="RHEA:16237"/>
        <dbReference type="Rhea" id="RHEA-COMP:10747"/>
        <dbReference type="Rhea" id="RHEA-COMP:10748"/>
        <dbReference type="ChEBI" id="CHEBI:83833"/>
        <dbReference type="ChEBI" id="CHEBI:83834"/>
        <dbReference type="EC" id="5.2.1.8"/>
    </reaction>
</comment>
<comment type="subcellular location">
    <subcellularLocation>
        <location evidence="1">Cell membrane</location>
        <topology evidence="1">Lipid-anchor</topology>
    </subcellularLocation>
</comment>
<comment type="similarity">
    <text evidence="1">Belongs to the PrsA family.</text>
</comment>
<sequence>MKKKLLAGAITLLSVATLAACSKGSEGADLISMKGDVITEHQFYEQVKSNPSAQQVLLNMTIQKVFEKQYGSELDDKEVDDTIAEEKKQYGENYQRVLSQAGMTLETRKAQIRTSKLVELAVKKVAEAELTDEAYKKAFDEYTPDVTAQIIRLNNEDKAKEVLEKAKAEGADFAQLAKDNSTDEKTKENGGEITFDSASTEVPEQVKKAAFALDVDGVSDVITATGTQAYSSQYYIVKLTKKTEKSSNIDDYKEKLKTVILTQKQNDSTFVQSIIGKELQAANIKVKDQAFQNIFTQYIGGGDSSSSSSTSNE</sequence>
<proteinExistence type="inferred from homology"/>
<reference key="1">
    <citation type="journal article" date="2001" name="Science">
        <title>Complete genome sequence of a virulent isolate of Streptococcus pneumoniae.</title>
        <authorList>
            <person name="Tettelin H."/>
            <person name="Nelson K.E."/>
            <person name="Paulsen I.T."/>
            <person name="Eisen J.A."/>
            <person name="Read T.D."/>
            <person name="Peterson S.N."/>
            <person name="Heidelberg J.F."/>
            <person name="DeBoy R.T."/>
            <person name="Haft D.H."/>
            <person name="Dodson R.J."/>
            <person name="Durkin A.S."/>
            <person name="Gwinn M.L."/>
            <person name="Kolonay J.F."/>
            <person name="Nelson W.C."/>
            <person name="Peterson J.D."/>
            <person name="Umayam L.A."/>
            <person name="White O."/>
            <person name="Salzberg S.L."/>
            <person name="Lewis M.R."/>
            <person name="Radune D."/>
            <person name="Holtzapple E.K."/>
            <person name="Khouri H.M."/>
            <person name="Wolf A.M."/>
            <person name="Utterback T.R."/>
            <person name="Hansen C.L."/>
            <person name="McDonald L.A."/>
            <person name="Feldblyum T.V."/>
            <person name="Angiuoli S.V."/>
            <person name="Dickinson T."/>
            <person name="Hickey E.K."/>
            <person name="Holt I.E."/>
            <person name="Loftus B.J."/>
            <person name="Yang F."/>
            <person name="Smith H.O."/>
            <person name="Venter J.C."/>
            <person name="Dougherty B.A."/>
            <person name="Morrison D.A."/>
            <person name="Hollingshead S.K."/>
            <person name="Fraser C.M."/>
        </authorList>
    </citation>
    <scope>NUCLEOTIDE SEQUENCE [LARGE SCALE GENOMIC DNA]</scope>
    <source>
        <strain>ATCC BAA-334 / TIGR4</strain>
    </source>
</reference>
<accession>Q97R51</accession>
<evidence type="ECO:0000255" key="1">
    <source>
        <dbReference type="HAMAP-Rule" id="MF_01145"/>
    </source>
</evidence>
<organism>
    <name type="scientific">Streptococcus pneumoniae serotype 4 (strain ATCC BAA-334 / TIGR4)</name>
    <dbReference type="NCBI Taxonomy" id="170187"/>
    <lineage>
        <taxon>Bacteria</taxon>
        <taxon>Bacillati</taxon>
        <taxon>Bacillota</taxon>
        <taxon>Bacilli</taxon>
        <taxon>Lactobacillales</taxon>
        <taxon>Streptococcaceae</taxon>
        <taxon>Streptococcus</taxon>
    </lineage>
</organism>
<dbReference type="EC" id="5.2.1.8" evidence="1"/>
<dbReference type="EMBL" id="AE005672">
    <property type="protein sequence ID" value="AAK75102.1"/>
    <property type="molecule type" value="Genomic_DNA"/>
</dbReference>
<dbReference type="PIR" id="E95113">
    <property type="entry name" value="E95113"/>
</dbReference>
<dbReference type="RefSeq" id="WP_000727952.1">
    <property type="nucleotide sequence ID" value="NZ_CP155539.1"/>
</dbReference>
<dbReference type="SMR" id="Q97R51"/>
<dbReference type="PaxDb" id="170187-SP_0981"/>
<dbReference type="EnsemblBacteria" id="AAK75102">
    <property type="protein sequence ID" value="AAK75102"/>
    <property type="gene ID" value="SP_0981"/>
</dbReference>
<dbReference type="KEGG" id="spn:SP_0981"/>
<dbReference type="eggNOG" id="COG0760">
    <property type="taxonomic scope" value="Bacteria"/>
</dbReference>
<dbReference type="PhylomeDB" id="Q97R51"/>
<dbReference type="BioCyc" id="SPNE170187:G1FZB-1009-MONOMER"/>
<dbReference type="Proteomes" id="UP000000585">
    <property type="component" value="Chromosome"/>
</dbReference>
<dbReference type="GO" id="GO:0005886">
    <property type="term" value="C:plasma membrane"/>
    <property type="evidence" value="ECO:0007669"/>
    <property type="project" value="UniProtKB-SubCell"/>
</dbReference>
<dbReference type="GO" id="GO:0003755">
    <property type="term" value="F:peptidyl-prolyl cis-trans isomerase activity"/>
    <property type="evidence" value="ECO:0007669"/>
    <property type="project" value="UniProtKB-UniRule"/>
</dbReference>
<dbReference type="GO" id="GO:0006457">
    <property type="term" value="P:protein folding"/>
    <property type="evidence" value="ECO:0007669"/>
    <property type="project" value="UniProtKB-UniRule"/>
</dbReference>
<dbReference type="Gene3D" id="3.10.50.40">
    <property type="match status" value="1"/>
</dbReference>
<dbReference type="HAMAP" id="MF_01145">
    <property type="entry name" value="Foldase_PrsA"/>
    <property type="match status" value="1"/>
</dbReference>
<dbReference type="InterPro" id="IPR023059">
    <property type="entry name" value="Foldase_PrsA"/>
</dbReference>
<dbReference type="InterPro" id="IPR046357">
    <property type="entry name" value="PPIase_dom_sf"/>
</dbReference>
<dbReference type="InterPro" id="IPR000297">
    <property type="entry name" value="PPIase_PpiC"/>
</dbReference>
<dbReference type="InterPro" id="IPR050245">
    <property type="entry name" value="PrsA_foldase"/>
</dbReference>
<dbReference type="InterPro" id="IPR027304">
    <property type="entry name" value="Trigger_fact/SurA_dom_sf"/>
</dbReference>
<dbReference type="NCBIfam" id="NF002361">
    <property type="entry name" value="PRK01326.1"/>
    <property type="match status" value="1"/>
</dbReference>
<dbReference type="PANTHER" id="PTHR47245:SF1">
    <property type="entry name" value="FOLDASE PROTEIN PRSA"/>
    <property type="match status" value="1"/>
</dbReference>
<dbReference type="PANTHER" id="PTHR47245">
    <property type="entry name" value="PEPTIDYLPROLYL ISOMERASE"/>
    <property type="match status" value="1"/>
</dbReference>
<dbReference type="Pfam" id="PF00639">
    <property type="entry name" value="Rotamase"/>
    <property type="match status" value="1"/>
</dbReference>
<dbReference type="SUPFAM" id="SSF54534">
    <property type="entry name" value="FKBP-like"/>
    <property type="match status" value="1"/>
</dbReference>
<dbReference type="SUPFAM" id="SSF109998">
    <property type="entry name" value="Triger factor/SurA peptide-binding domain-like"/>
    <property type="match status" value="1"/>
</dbReference>
<dbReference type="PROSITE" id="PS50198">
    <property type="entry name" value="PPIC_PPIASE_2"/>
    <property type="match status" value="1"/>
</dbReference>
<dbReference type="PROSITE" id="PS51257">
    <property type="entry name" value="PROKAR_LIPOPROTEIN"/>
    <property type="match status" value="1"/>
</dbReference>
<gene>
    <name evidence="1" type="primary">prsA</name>
    <name type="ordered locus">SP_0981</name>
</gene>
<protein>
    <recommendedName>
        <fullName evidence="1">Foldase protein PrsA</fullName>
        <ecNumber evidence="1">5.2.1.8</ecNumber>
    </recommendedName>
</protein>
<name>PRSA_STRPN</name>
<feature type="signal peptide" evidence="1">
    <location>
        <begin position="1"/>
        <end position="20"/>
    </location>
</feature>
<feature type="chain" id="PRO_0000029327" description="Foldase protein PrsA">
    <location>
        <begin position="21"/>
        <end position="313"/>
    </location>
</feature>
<feature type="domain" description="PpiC" evidence="1">
    <location>
        <begin position="143"/>
        <end position="241"/>
    </location>
</feature>
<feature type="lipid moiety-binding region" description="N-palmitoyl cysteine" evidence="1">
    <location>
        <position position="21"/>
    </location>
</feature>
<feature type="lipid moiety-binding region" description="S-diacylglycerol cysteine" evidence="1">
    <location>
        <position position="21"/>
    </location>
</feature>